<accession>P29169</accession>
<reference key="1">
    <citation type="journal article" date="1991" name="Gene">
        <title>Sequence analysis of the simian foamy virus type 1 genome.</title>
        <authorList>
            <person name="Kupiec J.-J."/>
            <person name="Kay A."/>
            <person name="Hayat M."/>
            <person name="Ravier R."/>
            <person name="Peries J."/>
            <person name="Galibert F."/>
        </authorList>
    </citation>
    <scope>NUCLEOTIDE SEQUENCE [GENOMIC DNA]</scope>
</reference>
<reference key="2">
    <citation type="journal article" date="1991" name="J. Virol.">
        <title>Identification of the simian foamy virus transcriptional transactivator gene (taf).</title>
        <authorList>
            <person name="Mergia A."/>
            <person name="Shaw K.E.S."/>
            <person name="Pratt-Lowe E."/>
            <person name="Barry P.A."/>
            <person name="Luciw P.A."/>
        </authorList>
    </citation>
    <scope>NUCLEOTIDE SEQUENCE [GENOMIC DNA]</scope>
</reference>
<dbReference type="EMBL" id="X54482">
    <property type="status" value="NOT_ANNOTATED_CDS"/>
    <property type="molecule type" value="Genomic_DNA"/>
</dbReference>
<dbReference type="EMBL" id="M74039">
    <property type="protein sequence ID" value="AAA47802.1"/>
    <property type="molecule type" value="Genomic_DNA"/>
</dbReference>
<dbReference type="PIR" id="B39924">
    <property type="entry name" value="WMLJS1"/>
</dbReference>
<dbReference type="PIR" id="S18740">
    <property type="entry name" value="S18740"/>
</dbReference>
<dbReference type="RefSeq" id="YP_001961124.1">
    <property type="nucleotide sequence ID" value="NC_010819.1"/>
</dbReference>
<dbReference type="Proteomes" id="UP000007216">
    <property type="component" value="Segment"/>
</dbReference>
<dbReference type="GO" id="GO:0042025">
    <property type="term" value="C:host cell nucleus"/>
    <property type="evidence" value="ECO:0007669"/>
    <property type="project" value="UniProtKB-SubCell"/>
</dbReference>
<dbReference type="GO" id="GO:0003677">
    <property type="term" value="F:DNA binding"/>
    <property type="evidence" value="ECO:0007669"/>
    <property type="project" value="UniProtKB-KW"/>
</dbReference>
<dbReference type="GO" id="GO:0045893">
    <property type="term" value="P:positive regulation of DNA-templated transcription"/>
    <property type="evidence" value="ECO:0007669"/>
    <property type="project" value="InterPro"/>
</dbReference>
<dbReference type="GO" id="GO:0016032">
    <property type="term" value="P:viral process"/>
    <property type="evidence" value="ECO:0007669"/>
    <property type="project" value="InterPro"/>
</dbReference>
<dbReference type="InterPro" id="IPR004956">
    <property type="entry name" value="Foamy_BEL"/>
</dbReference>
<dbReference type="Pfam" id="PF03274">
    <property type="entry name" value="Foamy_BEL"/>
    <property type="match status" value="2"/>
</dbReference>
<sequence>MASWEAQEELRELLHHLPEDDPPADLTHLLELDEMEPKVLCGENPGDEKLKKQVIKTPPMHPSTVTWHFGYKQKEDQQDNIKMRDWVPDPSKMSKSTCKRLILLGLYQACKAQEIIKMDYDVHWEKSVVNEQYFEVEYNCKMCRTVLHEPMPIMYDPETELWVKPGRLRGPLGSAVYTLKKHYERCLLTLPSLKGTRLPKRRCNPSRRYETFREHPPTRKRRSKEGIPTDQQPSTSNGDPMALLSGPCGPHSIQPPSCLLQELPKPEVGSPEMAVAMSGGPFWEEVYGDSIFATPLGSSEDQLLSQFD</sequence>
<organism>
    <name type="scientific">Simian foamy virus type 1</name>
    <name type="common">SFVmac</name>
    <name type="synonym">SFV-1</name>
    <dbReference type="NCBI Taxonomy" id="338478"/>
    <lineage>
        <taxon>Viruses</taxon>
        <taxon>Riboviria</taxon>
        <taxon>Pararnavirae</taxon>
        <taxon>Artverviricota</taxon>
        <taxon>Revtraviricetes</taxon>
        <taxon>Ortervirales</taxon>
        <taxon>Retroviridae</taxon>
        <taxon>Spumaretrovirinae</taxon>
        <taxon>Spumavirus</taxon>
    </lineage>
</organism>
<name>BEL1_SFV1</name>
<evidence type="ECO:0000250" key="1"/>
<evidence type="ECO:0000255" key="2"/>
<evidence type="ECO:0000256" key="3">
    <source>
        <dbReference type="SAM" id="MobiDB-lite"/>
    </source>
</evidence>
<keyword id="KW-0010">Activator</keyword>
<keyword id="KW-0025">Alternative splicing</keyword>
<keyword id="KW-0238">DNA-binding</keyword>
<keyword id="KW-1048">Host nucleus</keyword>
<keyword id="KW-0804">Transcription</keyword>
<keyword id="KW-0805">Transcription regulation</keyword>
<protein>
    <recommendedName>
        <fullName>Protein Bel-1</fullName>
    </recommendedName>
    <alternativeName>
        <fullName>Transactivator of spumavirus</fullName>
        <shortName>Tas</shortName>
    </alternativeName>
    <alternativeName>
        <fullName>Transcriptional transactivator</fullName>
    </alternativeName>
</protein>
<organismHost>
    <name type="scientific">Homo sapiens</name>
    <name type="common">Human</name>
    <dbReference type="NCBI Taxonomy" id="9606"/>
</organismHost>
<organismHost>
    <name type="scientific">Macaca</name>
    <name type="common">macaques</name>
    <dbReference type="NCBI Taxonomy" id="9539"/>
</organismHost>
<feature type="chain" id="PRO_0000125510" description="Protein Bel-1">
    <location>
        <begin position="1"/>
        <end position="308"/>
    </location>
</feature>
<feature type="DNA-binding region" evidence="2">
    <location>
        <begin position="94"/>
        <end position="203"/>
    </location>
</feature>
<feature type="region of interest" description="Disordered" evidence="3">
    <location>
        <begin position="200"/>
        <end position="242"/>
    </location>
</feature>
<feature type="region of interest" description="Transactivation domain" evidence="2">
    <location>
        <begin position="228"/>
        <end position="304"/>
    </location>
</feature>
<feature type="short sequence motif" description="Nuclear localization signal" evidence="1">
    <location>
        <begin position="217"/>
        <end position="226"/>
    </location>
</feature>
<feature type="compositionally biased region" description="Basic and acidic residues" evidence="3">
    <location>
        <begin position="207"/>
        <end position="217"/>
    </location>
</feature>
<feature type="compositionally biased region" description="Polar residues" evidence="3">
    <location>
        <begin position="229"/>
        <end position="238"/>
    </location>
</feature>
<comment type="function">
    <text evidence="1">Transcriptional transactivator that activates the viral internal promoter (IP), thereby enhancing its own expression. This transactivation is repressed by nuclear factor I. Also transactivates the long terminal repeat (LTR) promoter, thereby inducing structural gene expression, initiating the late phase of infection. It is therefore a key regulator of viral gene expression. It directly binds to and activates DNA target sites of viral promoters and those of distinct cellular genes. Required for viral replication (By similarity).</text>
</comment>
<comment type="subunit">
    <text evidence="1">Homodimer or homomultimer. Forms complexes with the host nuclear factors NFIA, NFIB, NFIC or NFIX (By similarity).</text>
</comment>
<comment type="subcellular location">
    <subcellularLocation>
        <location evidence="1">Host nucleus</location>
    </subcellularLocation>
</comment>
<comment type="alternative products">
    <event type="alternative splicing"/>
    <isoform>
        <id>P29169-1</id>
        <name>Bel-1</name>
        <sequence type="displayed"/>
    </isoform>
    <isoform>
        <id>P29169-2</id>
        <name>Bet</name>
        <sequence type="not described"/>
    </isoform>
</comment>
<gene>
    <name type="primary">bel1</name>
    <name type="synonym">taf</name>
    <name type="synonym">tas</name>
</gene>
<proteinExistence type="inferred from homology"/>